<evidence type="ECO:0000255" key="1">
    <source>
        <dbReference type="HAMAP-Rule" id="MF_00388"/>
    </source>
</evidence>
<dbReference type="EC" id="3.5.1.108" evidence="1"/>
<dbReference type="EMBL" id="BA000022">
    <property type="protein sequence ID" value="BAA17007.1"/>
    <property type="molecule type" value="Genomic_DNA"/>
</dbReference>
<dbReference type="PIR" id="S74967">
    <property type="entry name" value="S74967"/>
</dbReference>
<dbReference type="SMR" id="P72988"/>
<dbReference type="DIP" id="DIP-48806N"/>
<dbReference type="IntAct" id="P72988">
    <property type="interactions" value="6"/>
</dbReference>
<dbReference type="STRING" id="1148.gene:10497868"/>
<dbReference type="PaxDb" id="1148-1652082"/>
<dbReference type="EnsemblBacteria" id="BAA17007">
    <property type="protein sequence ID" value="BAA17007"/>
    <property type="gene ID" value="BAA17007"/>
</dbReference>
<dbReference type="KEGG" id="syn:sll1508"/>
<dbReference type="eggNOG" id="COG0774">
    <property type="taxonomic scope" value="Bacteria"/>
</dbReference>
<dbReference type="InParanoid" id="P72988"/>
<dbReference type="PhylomeDB" id="P72988"/>
<dbReference type="UniPathway" id="UPA00359">
    <property type="reaction ID" value="UER00478"/>
</dbReference>
<dbReference type="Proteomes" id="UP000001425">
    <property type="component" value="Chromosome"/>
</dbReference>
<dbReference type="GO" id="GO:0016020">
    <property type="term" value="C:membrane"/>
    <property type="evidence" value="ECO:0007669"/>
    <property type="project" value="GOC"/>
</dbReference>
<dbReference type="GO" id="GO:0046872">
    <property type="term" value="F:metal ion binding"/>
    <property type="evidence" value="ECO:0007669"/>
    <property type="project" value="UniProtKB-KW"/>
</dbReference>
<dbReference type="GO" id="GO:0103117">
    <property type="term" value="F:UDP-3-O-acyl-N-acetylglucosamine deacetylase activity"/>
    <property type="evidence" value="ECO:0007669"/>
    <property type="project" value="UniProtKB-UniRule"/>
</dbReference>
<dbReference type="GO" id="GO:0009245">
    <property type="term" value="P:lipid A biosynthetic process"/>
    <property type="evidence" value="ECO:0007669"/>
    <property type="project" value="UniProtKB-UniRule"/>
</dbReference>
<dbReference type="Gene3D" id="3.30.230.20">
    <property type="entry name" value="lpxc deacetylase, domain 1"/>
    <property type="match status" value="1"/>
</dbReference>
<dbReference type="Gene3D" id="3.30.1700.10">
    <property type="entry name" value="lpxc deacetylase, domain 2"/>
    <property type="match status" value="1"/>
</dbReference>
<dbReference type="HAMAP" id="MF_00388">
    <property type="entry name" value="LpxC"/>
    <property type="match status" value="1"/>
</dbReference>
<dbReference type="InterPro" id="IPR020568">
    <property type="entry name" value="Ribosomal_Su5_D2-typ_SF"/>
</dbReference>
<dbReference type="InterPro" id="IPR004463">
    <property type="entry name" value="UDP-acyl_GlcNac_deAcase"/>
</dbReference>
<dbReference type="InterPro" id="IPR011334">
    <property type="entry name" value="UDP-acyl_GlcNac_deAcase_C"/>
</dbReference>
<dbReference type="InterPro" id="IPR015870">
    <property type="entry name" value="UDP-acyl_N-AcGlcN_deAcase_N"/>
</dbReference>
<dbReference type="NCBIfam" id="TIGR00325">
    <property type="entry name" value="lpxC"/>
    <property type="match status" value="1"/>
</dbReference>
<dbReference type="PANTHER" id="PTHR33694">
    <property type="entry name" value="UDP-3-O-ACYL-N-ACETYLGLUCOSAMINE DEACETYLASE 1, MITOCHONDRIAL-RELATED"/>
    <property type="match status" value="1"/>
</dbReference>
<dbReference type="PANTHER" id="PTHR33694:SF1">
    <property type="entry name" value="UDP-3-O-ACYL-N-ACETYLGLUCOSAMINE DEACETYLASE 1, MITOCHONDRIAL-RELATED"/>
    <property type="match status" value="1"/>
</dbReference>
<dbReference type="Pfam" id="PF03331">
    <property type="entry name" value="LpxC"/>
    <property type="match status" value="1"/>
</dbReference>
<dbReference type="SUPFAM" id="SSF54211">
    <property type="entry name" value="Ribosomal protein S5 domain 2-like"/>
    <property type="match status" value="2"/>
</dbReference>
<reference key="1">
    <citation type="journal article" date="1996" name="DNA Res.">
        <title>Sequence analysis of the genome of the unicellular cyanobacterium Synechocystis sp. strain PCC6803. II. Sequence determination of the entire genome and assignment of potential protein-coding regions.</title>
        <authorList>
            <person name="Kaneko T."/>
            <person name="Sato S."/>
            <person name="Kotani H."/>
            <person name="Tanaka A."/>
            <person name="Asamizu E."/>
            <person name="Nakamura Y."/>
            <person name="Miyajima N."/>
            <person name="Hirosawa M."/>
            <person name="Sugiura M."/>
            <person name="Sasamoto S."/>
            <person name="Kimura T."/>
            <person name="Hosouchi T."/>
            <person name="Matsuno A."/>
            <person name="Muraki A."/>
            <person name="Nakazaki N."/>
            <person name="Naruo K."/>
            <person name="Okumura S."/>
            <person name="Shimpo S."/>
            <person name="Takeuchi C."/>
            <person name="Wada T."/>
            <person name="Watanabe A."/>
            <person name="Yamada M."/>
            <person name="Yasuda M."/>
            <person name="Tabata S."/>
        </authorList>
    </citation>
    <scope>NUCLEOTIDE SEQUENCE [LARGE SCALE GENOMIC DNA]</scope>
    <source>
        <strain>ATCC 27184 / PCC 6803 / Kazusa</strain>
    </source>
</reference>
<name>LPXC_SYNY3</name>
<protein>
    <recommendedName>
        <fullName evidence="1">UDP-3-O-acyl-N-acetylglucosamine deacetylase</fullName>
        <shortName evidence="1">UDP-3-O-acyl-GlcNAc deacetylase</shortName>
        <ecNumber evidence="1">3.5.1.108</ecNumber>
    </recommendedName>
    <alternativeName>
        <fullName evidence="1">UDP-3-O-[R-3-hydroxymyristoyl]-N-acetylglucosamine deacetylase</fullName>
    </alternativeName>
</protein>
<organism>
    <name type="scientific">Synechocystis sp. (strain ATCC 27184 / PCC 6803 / Kazusa)</name>
    <dbReference type="NCBI Taxonomy" id="1111708"/>
    <lineage>
        <taxon>Bacteria</taxon>
        <taxon>Bacillati</taxon>
        <taxon>Cyanobacteriota</taxon>
        <taxon>Cyanophyceae</taxon>
        <taxon>Synechococcales</taxon>
        <taxon>Merismopediaceae</taxon>
        <taxon>Synechocystis</taxon>
    </lineage>
</organism>
<gene>
    <name evidence="1" type="primary">lpxC</name>
    <name type="ordered locus">sll1508</name>
</gene>
<keyword id="KW-0378">Hydrolase</keyword>
<keyword id="KW-0441">Lipid A biosynthesis</keyword>
<keyword id="KW-0444">Lipid biosynthesis</keyword>
<keyword id="KW-0443">Lipid metabolism</keyword>
<keyword id="KW-0479">Metal-binding</keyword>
<keyword id="KW-1185">Reference proteome</keyword>
<keyword id="KW-0862">Zinc</keyword>
<proteinExistence type="inferred from homology"/>
<feature type="chain" id="PRO_0000191960" description="UDP-3-O-acyl-N-acetylglucosamine deacetylase">
    <location>
        <begin position="1"/>
        <end position="276"/>
    </location>
</feature>
<feature type="active site" description="Proton donor" evidence="1">
    <location>
        <position position="261"/>
    </location>
</feature>
<feature type="binding site" evidence="1">
    <location>
        <position position="76"/>
    </location>
    <ligand>
        <name>Zn(2+)</name>
        <dbReference type="ChEBI" id="CHEBI:29105"/>
    </ligand>
</feature>
<feature type="binding site" evidence="1">
    <location>
        <position position="234"/>
    </location>
    <ligand>
        <name>Zn(2+)</name>
        <dbReference type="ChEBI" id="CHEBI:29105"/>
    </ligand>
</feature>
<feature type="binding site" evidence="1">
    <location>
        <position position="238"/>
    </location>
    <ligand>
        <name>Zn(2+)</name>
        <dbReference type="ChEBI" id="CHEBI:29105"/>
    </ligand>
</feature>
<comment type="function">
    <text evidence="1">Catalyzes the hydrolysis of UDP-3-O-myristoyl-N-acetylglucosamine to form UDP-3-O-myristoylglucosamine and acetate, the committed step in lipid A biosynthesis.</text>
</comment>
<comment type="catalytic activity">
    <reaction evidence="1">
        <text>a UDP-3-O-[(3R)-3-hydroxyacyl]-N-acetyl-alpha-D-glucosamine + H2O = a UDP-3-O-[(3R)-3-hydroxyacyl]-alpha-D-glucosamine + acetate</text>
        <dbReference type="Rhea" id="RHEA:67816"/>
        <dbReference type="ChEBI" id="CHEBI:15377"/>
        <dbReference type="ChEBI" id="CHEBI:30089"/>
        <dbReference type="ChEBI" id="CHEBI:137740"/>
        <dbReference type="ChEBI" id="CHEBI:173225"/>
        <dbReference type="EC" id="3.5.1.108"/>
    </reaction>
</comment>
<comment type="cofactor">
    <cofactor evidence="1">
        <name>Zn(2+)</name>
        <dbReference type="ChEBI" id="CHEBI:29105"/>
    </cofactor>
</comment>
<comment type="pathway">
    <text evidence="1">Glycolipid biosynthesis; lipid IV(A) biosynthesis; lipid IV(A) from (3R)-3-hydroxytetradecanoyl-[acyl-carrier-protein] and UDP-N-acetyl-alpha-D-glucosamine: step 2/6.</text>
</comment>
<comment type="similarity">
    <text evidence="1">Belongs to the LpxC family.</text>
</comment>
<accession>P72988</accession>
<sequence length="276" mass="30326">MGHTIKAPLTVQGVGLHSGVETTVTLCPVAAGKGRYFQRVDLPKKPIIPADLTWVREAMLSTELGEPGATIRTVEHLLATLVALDIGDLRIEVNGPEVPLLDGSALSWLTAIAKVGTRPRSKKSQDQPIVITDPLTCQLEDAFVAAFPCATTRFSYGVDYPYLPIGKQWYTWEPDQENFATAIAPARTFGFADQIEKLRQAGLIKGGSLENALVCDKEKWLNPPLRFPDEPVRHKLLDLLGDLSLLGKIPQAHFVAYKASHKLHTQLAQKIADTYR</sequence>